<feature type="chain" id="PRO_1000022929" description="2-C-methyl-D-erythritol 4-phosphate cytidylyltransferase">
    <location>
        <begin position="1"/>
        <end position="236"/>
    </location>
</feature>
<feature type="site" description="Transition state stabilizer" evidence="1">
    <location>
        <position position="20"/>
    </location>
</feature>
<feature type="site" description="Transition state stabilizer" evidence="1">
    <location>
        <position position="27"/>
    </location>
</feature>
<feature type="site" description="Positions MEP for the nucleophilic attack" evidence="1">
    <location>
        <position position="157"/>
    </location>
</feature>
<feature type="site" description="Positions MEP for the nucleophilic attack" evidence="1">
    <location>
        <position position="213"/>
    </location>
</feature>
<comment type="function">
    <text evidence="1">Catalyzes the formation of 4-diphosphocytidyl-2-C-methyl-D-erythritol from CTP and 2-C-methyl-D-erythritol 4-phosphate (MEP).</text>
</comment>
<comment type="catalytic activity">
    <reaction evidence="1">
        <text>2-C-methyl-D-erythritol 4-phosphate + CTP + H(+) = 4-CDP-2-C-methyl-D-erythritol + diphosphate</text>
        <dbReference type="Rhea" id="RHEA:13429"/>
        <dbReference type="ChEBI" id="CHEBI:15378"/>
        <dbReference type="ChEBI" id="CHEBI:33019"/>
        <dbReference type="ChEBI" id="CHEBI:37563"/>
        <dbReference type="ChEBI" id="CHEBI:57823"/>
        <dbReference type="ChEBI" id="CHEBI:58262"/>
        <dbReference type="EC" id="2.7.7.60"/>
    </reaction>
</comment>
<comment type="pathway">
    <text evidence="1">Isoprenoid biosynthesis; isopentenyl diphosphate biosynthesis via DXP pathway; isopentenyl diphosphate from 1-deoxy-D-xylulose 5-phosphate: step 2/6.</text>
</comment>
<comment type="subunit">
    <text evidence="1">Homodimer.</text>
</comment>
<comment type="similarity">
    <text evidence="1">Belongs to the IspD/TarI cytidylyltransferase family. IspD subfamily.</text>
</comment>
<keyword id="KW-0414">Isoprene biosynthesis</keyword>
<keyword id="KW-0548">Nucleotidyltransferase</keyword>
<keyword id="KW-0808">Transferase</keyword>
<protein>
    <recommendedName>
        <fullName evidence="1">2-C-methyl-D-erythritol 4-phosphate cytidylyltransferase</fullName>
        <ecNumber evidence="1">2.7.7.60</ecNumber>
    </recommendedName>
    <alternativeName>
        <fullName evidence="1">4-diphosphocytidyl-2C-methyl-D-erythritol synthase</fullName>
    </alternativeName>
    <alternativeName>
        <fullName evidence="1">MEP cytidylyltransferase</fullName>
        <shortName evidence="1">MCT</shortName>
    </alternativeName>
</protein>
<accession>A6TD39</accession>
<dbReference type="EC" id="2.7.7.60" evidence="1"/>
<dbReference type="EMBL" id="CP000647">
    <property type="protein sequence ID" value="ABR78510.1"/>
    <property type="molecule type" value="Genomic_DNA"/>
</dbReference>
<dbReference type="RefSeq" id="WP_009485534.1">
    <property type="nucleotide sequence ID" value="NC_009648.1"/>
</dbReference>
<dbReference type="SMR" id="A6TD39"/>
<dbReference type="STRING" id="272620.KPN_03109"/>
<dbReference type="PaxDb" id="272620-KPN_03109"/>
<dbReference type="EnsemblBacteria" id="ABR78510">
    <property type="protein sequence ID" value="ABR78510"/>
    <property type="gene ID" value="KPN_03109"/>
</dbReference>
<dbReference type="KEGG" id="kpn:KPN_03109"/>
<dbReference type="HOGENOM" id="CLU_061281_3_1_6"/>
<dbReference type="UniPathway" id="UPA00056">
    <property type="reaction ID" value="UER00093"/>
</dbReference>
<dbReference type="Proteomes" id="UP000000265">
    <property type="component" value="Chromosome"/>
</dbReference>
<dbReference type="GO" id="GO:0050518">
    <property type="term" value="F:2-C-methyl-D-erythritol 4-phosphate cytidylyltransferase activity"/>
    <property type="evidence" value="ECO:0007669"/>
    <property type="project" value="UniProtKB-UniRule"/>
</dbReference>
<dbReference type="GO" id="GO:0019288">
    <property type="term" value="P:isopentenyl diphosphate biosynthetic process, methylerythritol 4-phosphate pathway"/>
    <property type="evidence" value="ECO:0007669"/>
    <property type="project" value="UniProtKB-UniRule"/>
</dbReference>
<dbReference type="CDD" id="cd02516">
    <property type="entry name" value="CDP-ME_synthetase"/>
    <property type="match status" value="1"/>
</dbReference>
<dbReference type="FunFam" id="3.90.550.10:FF:000003">
    <property type="entry name" value="2-C-methyl-D-erythritol 4-phosphate cytidylyltransferase"/>
    <property type="match status" value="1"/>
</dbReference>
<dbReference type="Gene3D" id="3.90.550.10">
    <property type="entry name" value="Spore Coat Polysaccharide Biosynthesis Protein SpsA, Chain A"/>
    <property type="match status" value="1"/>
</dbReference>
<dbReference type="HAMAP" id="MF_00108">
    <property type="entry name" value="IspD"/>
    <property type="match status" value="1"/>
</dbReference>
<dbReference type="InterPro" id="IPR001228">
    <property type="entry name" value="IspD"/>
</dbReference>
<dbReference type="InterPro" id="IPR034683">
    <property type="entry name" value="IspD/TarI"/>
</dbReference>
<dbReference type="InterPro" id="IPR050088">
    <property type="entry name" value="IspD/TarI_cytidylyltransf_bact"/>
</dbReference>
<dbReference type="InterPro" id="IPR018294">
    <property type="entry name" value="ISPD_synthase_CS"/>
</dbReference>
<dbReference type="InterPro" id="IPR029044">
    <property type="entry name" value="Nucleotide-diphossugar_trans"/>
</dbReference>
<dbReference type="NCBIfam" id="TIGR00453">
    <property type="entry name" value="ispD"/>
    <property type="match status" value="1"/>
</dbReference>
<dbReference type="PANTHER" id="PTHR32125">
    <property type="entry name" value="2-C-METHYL-D-ERYTHRITOL 4-PHOSPHATE CYTIDYLYLTRANSFERASE, CHLOROPLASTIC"/>
    <property type="match status" value="1"/>
</dbReference>
<dbReference type="PANTHER" id="PTHR32125:SF4">
    <property type="entry name" value="2-C-METHYL-D-ERYTHRITOL 4-PHOSPHATE CYTIDYLYLTRANSFERASE, CHLOROPLASTIC"/>
    <property type="match status" value="1"/>
</dbReference>
<dbReference type="Pfam" id="PF01128">
    <property type="entry name" value="IspD"/>
    <property type="match status" value="1"/>
</dbReference>
<dbReference type="SUPFAM" id="SSF53448">
    <property type="entry name" value="Nucleotide-diphospho-sugar transferases"/>
    <property type="match status" value="1"/>
</dbReference>
<dbReference type="PROSITE" id="PS01295">
    <property type="entry name" value="ISPD"/>
    <property type="match status" value="1"/>
</dbReference>
<evidence type="ECO:0000255" key="1">
    <source>
        <dbReference type="HAMAP-Rule" id="MF_00108"/>
    </source>
</evidence>
<name>ISPD_KLEP7</name>
<reference key="1">
    <citation type="submission" date="2006-09" db="EMBL/GenBank/DDBJ databases">
        <authorList>
            <consortium name="The Klebsiella pneumonia Genome Sequencing Project"/>
            <person name="McClelland M."/>
            <person name="Sanderson E.K."/>
            <person name="Spieth J."/>
            <person name="Clifton W.S."/>
            <person name="Latreille P."/>
            <person name="Sabo A."/>
            <person name="Pepin K."/>
            <person name="Bhonagiri V."/>
            <person name="Porwollik S."/>
            <person name="Ali J."/>
            <person name="Wilson R.K."/>
        </authorList>
    </citation>
    <scope>NUCLEOTIDE SEQUENCE [LARGE SCALE GENOMIC DNA]</scope>
    <source>
        <strain>ATCC 700721 / MGH 78578</strain>
    </source>
</reference>
<proteinExistence type="inferred from homology"/>
<sequence length="236" mass="25658">MAATFPGVCAVVPAAGFGRRMQTECPKQYLSIGNKTILEHAVAALLADARVQRVVIAVSPGDRRFSQLPLAQHPQITVVDGGAERADSVLAGLQALPEAQWVLVHDAARPCLHQDDLSRLLSLCETSRVGGILAAPVRDTMKRAEPGKTAIAHTVDRNDLWHALTPQFFPRELLVDCLTRALNEGATITDEASALEYCGFHPQLVAGRADNIKVTRPEDLALAEFYLTRSRHQEKA</sequence>
<gene>
    <name evidence="1" type="primary">ispD</name>
    <name type="ordered locus">KPN78578_30490</name>
    <name type="ORF">KPN_03109</name>
</gene>
<organism>
    <name type="scientific">Klebsiella pneumoniae subsp. pneumoniae (strain ATCC 700721 / MGH 78578)</name>
    <dbReference type="NCBI Taxonomy" id="272620"/>
    <lineage>
        <taxon>Bacteria</taxon>
        <taxon>Pseudomonadati</taxon>
        <taxon>Pseudomonadota</taxon>
        <taxon>Gammaproteobacteria</taxon>
        <taxon>Enterobacterales</taxon>
        <taxon>Enterobacteriaceae</taxon>
        <taxon>Klebsiella/Raoultella group</taxon>
        <taxon>Klebsiella</taxon>
        <taxon>Klebsiella pneumoniae complex</taxon>
    </lineage>
</organism>